<comment type="function">
    <text evidence="1">Increases the formation of ribosomal termination complexes and stimulates activities of RF-1 and RF-2. It binds guanine nucleotides and has strong preference for UGA stop codons. It may interact directly with the ribosome. The stimulation of RF-1 and RF-2 is significantly reduced by GTP and GDP, but not by GMP.</text>
</comment>
<comment type="subcellular location">
    <subcellularLocation>
        <location evidence="1">Cytoplasm</location>
    </subcellularLocation>
</comment>
<comment type="similarity">
    <text evidence="1">Belongs to the TRAFAC class translation factor GTPase superfamily. Classic translation factor GTPase family. PrfC subfamily.</text>
</comment>
<dbReference type="EMBL" id="AE016853">
    <property type="protein sequence ID" value="AAO58025.1"/>
    <property type="molecule type" value="Genomic_DNA"/>
</dbReference>
<dbReference type="RefSeq" id="NP_794330.1">
    <property type="nucleotide sequence ID" value="NC_004578.1"/>
</dbReference>
<dbReference type="RefSeq" id="WP_011105068.1">
    <property type="nucleotide sequence ID" value="NC_004578.1"/>
</dbReference>
<dbReference type="SMR" id="Q87WH1"/>
<dbReference type="STRING" id="223283.PSPTO_4579"/>
<dbReference type="GeneID" id="1186262"/>
<dbReference type="KEGG" id="pst:PSPTO_4579"/>
<dbReference type="PATRIC" id="fig|223283.9.peg.4697"/>
<dbReference type="eggNOG" id="COG4108">
    <property type="taxonomic scope" value="Bacteria"/>
</dbReference>
<dbReference type="HOGENOM" id="CLU_002794_2_1_6"/>
<dbReference type="OrthoDB" id="9801472at2"/>
<dbReference type="PhylomeDB" id="Q87WH1"/>
<dbReference type="Proteomes" id="UP000002515">
    <property type="component" value="Chromosome"/>
</dbReference>
<dbReference type="GO" id="GO:0005829">
    <property type="term" value="C:cytosol"/>
    <property type="evidence" value="ECO:0007669"/>
    <property type="project" value="TreeGrafter"/>
</dbReference>
<dbReference type="GO" id="GO:0005525">
    <property type="term" value="F:GTP binding"/>
    <property type="evidence" value="ECO:0007669"/>
    <property type="project" value="UniProtKB-UniRule"/>
</dbReference>
<dbReference type="GO" id="GO:0003924">
    <property type="term" value="F:GTPase activity"/>
    <property type="evidence" value="ECO:0007669"/>
    <property type="project" value="InterPro"/>
</dbReference>
<dbReference type="GO" id="GO:0097216">
    <property type="term" value="F:guanosine tetraphosphate binding"/>
    <property type="evidence" value="ECO:0007669"/>
    <property type="project" value="UniProtKB-ARBA"/>
</dbReference>
<dbReference type="GO" id="GO:0016150">
    <property type="term" value="F:translation release factor activity, codon nonspecific"/>
    <property type="evidence" value="ECO:0007669"/>
    <property type="project" value="TreeGrafter"/>
</dbReference>
<dbReference type="GO" id="GO:0016149">
    <property type="term" value="F:translation release factor activity, codon specific"/>
    <property type="evidence" value="ECO:0007669"/>
    <property type="project" value="UniProtKB-UniRule"/>
</dbReference>
<dbReference type="GO" id="GO:0006449">
    <property type="term" value="P:regulation of translational termination"/>
    <property type="evidence" value="ECO:0007669"/>
    <property type="project" value="UniProtKB-UniRule"/>
</dbReference>
<dbReference type="CDD" id="cd04169">
    <property type="entry name" value="RF3"/>
    <property type="match status" value="1"/>
</dbReference>
<dbReference type="CDD" id="cd03689">
    <property type="entry name" value="RF3_II"/>
    <property type="match status" value="1"/>
</dbReference>
<dbReference type="CDD" id="cd16259">
    <property type="entry name" value="RF3_III"/>
    <property type="match status" value="1"/>
</dbReference>
<dbReference type="FunFam" id="2.40.30.10:FF:000040">
    <property type="entry name" value="Peptide chain release factor 3"/>
    <property type="match status" value="1"/>
</dbReference>
<dbReference type="FunFam" id="3.30.70.3280:FF:000001">
    <property type="entry name" value="Peptide chain release factor 3"/>
    <property type="match status" value="1"/>
</dbReference>
<dbReference type="FunFam" id="3.40.50.300:FF:000542">
    <property type="entry name" value="Peptide chain release factor 3"/>
    <property type="match status" value="1"/>
</dbReference>
<dbReference type="Gene3D" id="3.40.50.300">
    <property type="entry name" value="P-loop containing nucleotide triphosphate hydrolases"/>
    <property type="match status" value="2"/>
</dbReference>
<dbReference type="Gene3D" id="3.30.70.3280">
    <property type="entry name" value="Peptide chain release factor 3, domain III"/>
    <property type="match status" value="1"/>
</dbReference>
<dbReference type="HAMAP" id="MF_00072">
    <property type="entry name" value="Rel_fac_3"/>
    <property type="match status" value="1"/>
</dbReference>
<dbReference type="InterPro" id="IPR053905">
    <property type="entry name" value="EF-G-like_DII"/>
</dbReference>
<dbReference type="InterPro" id="IPR035647">
    <property type="entry name" value="EFG_III/V"/>
</dbReference>
<dbReference type="InterPro" id="IPR031157">
    <property type="entry name" value="G_TR_CS"/>
</dbReference>
<dbReference type="InterPro" id="IPR027417">
    <property type="entry name" value="P-loop_NTPase"/>
</dbReference>
<dbReference type="InterPro" id="IPR004548">
    <property type="entry name" value="PrfC"/>
</dbReference>
<dbReference type="InterPro" id="IPR032090">
    <property type="entry name" value="RF3_C"/>
</dbReference>
<dbReference type="InterPro" id="IPR038467">
    <property type="entry name" value="RF3_dom_3_sf"/>
</dbReference>
<dbReference type="InterPro" id="IPR041732">
    <property type="entry name" value="RF3_GTP-bd"/>
</dbReference>
<dbReference type="InterPro" id="IPR005225">
    <property type="entry name" value="Small_GTP-bd"/>
</dbReference>
<dbReference type="InterPro" id="IPR000795">
    <property type="entry name" value="T_Tr_GTP-bd_dom"/>
</dbReference>
<dbReference type="InterPro" id="IPR009000">
    <property type="entry name" value="Transl_B-barrel_sf"/>
</dbReference>
<dbReference type="NCBIfam" id="TIGR00503">
    <property type="entry name" value="prfC"/>
    <property type="match status" value="1"/>
</dbReference>
<dbReference type="NCBIfam" id="NF001964">
    <property type="entry name" value="PRK00741.1"/>
    <property type="match status" value="1"/>
</dbReference>
<dbReference type="NCBIfam" id="TIGR00231">
    <property type="entry name" value="small_GTP"/>
    <property type="match status" value="1"/>
</dbReference>
<dbReference type="PANTHER" id="PTHR43556">
    <property type="entry name" value="PEPTIDE CHAIN RELEASE FACTOR RF3"/>
    <property type="match status" value="1"/>
</dbReference>
<dbReference type="PANTHER" id="PTHR43556:SF2">
    <property type="entry name" value="PEPTIDE CHAIN RELEASE FACTOR RF3"/>
    <property type="match status" value="1"/>
</dbReference>
<dbReference type="Pfam" id="PF22042">
    <property type="entry name" value="EF-G_D2"/>
    <property type="match status" value="1"/>
</dbReference>
<dbReference type="Pfam" id="PF00009">
    <property type="entry name" value="GTP_EFTU"/>
    <property type="match status" value="1"/>
</dbReference>
<dbReference type="Pfam" id="PF16658">
    <property type="entry name" value="RF3_C"/>
    <property type="match status" value="1"/>
</dbReference>
<dbReference type="PRINTS" id="PR00315">
    <property type="entry name" value="ELONGATNFCT"/>
</dbReference>
<dbReference type="SUPFAM" id="SSF54980">
    <property type="entry name" value="EF-G C-terminal domain-like"/>
    <property type="match status" value="1"/>
</dbReference>
<dbReference type="SUPFAM" id="SSF52540">
    <property type="entry name" value="P-loop containing nucleoside triphosphate hydrolases"/>
    <property type="match status" value="1"/>
</dbReference>
<dbReference type="SUPFAM" id="SSF50447">
    <property type="entry name" value="Translation proteins"/>
    <property type="match status" value="1"/>
</dbReference>
<dbReference type="PROSITE" id="PS00301">
    <property type="entry name" value="G_TR_1"/>
    <property type="match status" value="1"/>
</dbReference>
<dbReference type="PROSITE" id="PS51722">
    <property type="entry name" value="G_TR_2"/>
    <property type="match status" value="1"/>
</dbReference>
<feature type="chain" id="PRO_0000210957" description="Peptide chain release factor 3">
    <location>
        <begin position="1"/>
        <end position="527"/>
    </location>
</feature>
<feature type="domain" description="tr-type G">
    <location>
        <begin position="9"/>
        <end position="277"/>
    </location>
</feature>
<feature type="binding site" evidence="1">
    <location>
        <begin position="18"/>
        <end position="25"/>
    </location>
    <ligand>
        <name>GTP</name>
        <dbReference type="ChEBI" id="CHEBI:37565"/>
    </ligand>
</feature>
<feature type="binding site" evidence="1">
    <location>
        <begin position="86"/>
        <end position="90"/>
    </location>
    <ligand>
        <name>GTP</name>
        <dbReference type="ChEBI" id="CHEBI:37565"/>
    </ligand>
</feature>
<feature type="binding site" evidence="1">
    <location>
        <begin position="140"/>
        <end position="143"/>
    </location>
    <ligand>
        <name>GTP</name>
        <dbReference type="ChEBI" id="CHEBI:37565"/>
    </ligand>
</feature>
<proteinExistence type="inferred from homology"/>
<accession>Q87WH1</accession>
<reference key="1">
    <citation type="journal article" date="2003" name="Proc. Natl. Acad. Sci. U.S.A.">
        <title>The complete genome sequence of the Arabidopsis and tomato pathogen Pseudomonas syringae pv. tomato DC3000.</title>
        <authorList>
            <person name="Buell C.R."/>
            <person name="Joardar V."/>
            <person name="Lindeberg M."/>
            <person name="Selengut J."/>
            <person name="Paulsen I.T."/>
            <person name="Gwinn M.L."/>
            <person name="Dodson R.J."/>
            <person name="DeBoy R.T."/>
            <person name="Durkin A.S."/>
            <person name="Kolonay J.F."/>
            <person name="Madupu R."/>
            <person name="Daugherty S.C."/>
            <person name="Brinkac L.M."/>
            <person name="Beanan M.J."/>
            <person name="Haft D.H."/>
            <person name="Nelson W.C."/>
            <person name="Davidsen T.M."/>
            <person name="Zafar N."/>
            <person name="Zhou L."/>
            <person name="Liu J."/>
            <person name="Yuan Q."/>
            <person name="Khouri H.M."/>
            <person name="Fedorova N.B."/>
            <person name="Tran B."/>
            <person name="Russell D."/>
            <person name="Berry K.J."/>
            <person name="Utterback T.R."/>
            <person name="Van Aken S.E."/>
            <person name="Feldblyum T.V."/>
            <person name="D'Ascenzo M."/>
            <person name="Deng W.-L."/>
            <person name="Ramos A.R."/>
            <person name="Alfano J.R."/>
            <person name="Cartinhour S."/>
            <person name="Chatterjee A.K."/>
            <person name="Delaney T.P."/>
            <person name="Lazarowitz S.G."/>
            <person name="Martin G.B."/>
            <person name="Schneider D.J."/>
            <person name="Tang X."/>
            <person name="Bender C.L."/>
            <person name="White O."/>
            <person name="Fraser C.M."/>
            <person name="Collmer A."/>
        </authorList>
    </citation>
    <scope>NUCLEOTIDE SEQUENCE [LARGE SCALE GENOMIC DNA]</scope>
    <source>
        <strain>ATCC BAA-871 / DC3000</strain>
    </source>
</reference>
<gene>
    <name evidence="1" type="primary">prfC</name>
    <name type="ordered locus">PSPTO_4579</name>
</gene>
<evidence type="ECO:0000255" key="1">
    <source>
        <dbReference type="HAMAP-Rule" id="MF_00072"/>
    </source>
</evidence>
<name>RF3_PSESM</name>
<sequence length="527" mass="59623">MTQQAAEVAKRRTFAIISHPDAGKTTITEKLLLMGKAISVAGTVKSRKSDRHATSDWMEMEKQRGISITTSVMQFPYRDHMINLLDTPGHEDFSEDTYRTLTAVDSALMVLDGGKGVEPRTIALMDVCRLRDTPIVSFINKLDRDIRDPIELLDEIEAVLKIKAAPITWPIGCYRDFKGVYHLADDYIIVYTAGHGHERTDTKIIQNLDSDEARAHLGDEYDRFVEQLELVQGACHEFNQQEFIDGQLTPVFFGTALGNFGVDHVLDAVVNWAPMPLARVANERTVEPEEEKFAGFVFKIQANMDPKHRDRIAFMRICSGRYEKGMKMRHVRLGKDVRIGDALTFFSSEREQLEEAYAGDIIGLHNHGTIQIGDTFTEGEALGFTGIPHFAPELFRRVRLKDPLKSKQLRQGLQQLAEEGATQVFFPQRSNDIILGAVGVLQFDVVASRLKEEYKVECAYEPITVWSARWIDCADKKKLEEFENKAVENLAVDGGGHLTYLAPTRVNLALMEERWPDVKFSATREHH</sequence>
<keyword id="KW-0963">Cytoplasm</keyword>
<keyword id="KW-0342">GTP-binding</keyword>
<keyword id="KW-0547">Nucleotide-binding</keyword>
<keyword id="KW-0648">Protein biosynthesis</keyword>
<keyword id="KW-1185">Reference proteome</keyword>
<organism>
    <name type="scientific">Pseudomonas syringae pv. tomato (strain ATCC BAA-871 / DC3000)</name>
    <dbReference type="NCBI Taxonomy" id="223283"/>
    <lineage>
        <taxon>Bacteria</taxon>
        <taxon>Pseudomonadati</taxon>
        <taxon>Pseudomonadota</taxon>
        <taxon>Gammaproteobacteria</taxon>
        <taxon>Pseudomonadales</taxon>
        <taxon>Pseudomonadaceae</taxon>
        <taxon>Pseudomonas</taxon>
    </lineage>
</organism>
<protein>
    <recommendedName>
        <fullName evidence="1">Peptide chain release factor 3</fullName>
        <shortName evidence="1">RF-3</shortName>
    </recommendedName>
</protein>